<proteinExistence type="evidence at protein level"/>
<keyword id="KW-0067">ATP-binding</keyword>
<keyword id="KW-0547">Nucleotide-binding</keyword>
<keyword id="KW-1185">Reference proteome</keyword>
<keyword id="KW-0808">Transferase</keyword>
<keyword id="KW-0833">Ubl conjugation pathway</keyword>
<feature type="chain" id="PRO_0000082521" description="Ubiquitin-conjugating enzyme E2 N">
    <location>
        <begin position="1"/>
        <end position="151"/>
    </location>
</feature>
<feature type="domain" description="UBC core" evidence="1">
    <location>
        <begin position="3"/>
        <end position="149"/>
    </location>
</feature>
<feature type="active site" description="Glycyl thioester intermediate" evidence="1 2">
    <location>
        <position position="87"/>
    </location>
</feature>
<comment type="function">
    <text>Catalyzes the covalent attachment of ubiquitin to other proteins.</text>
</comment>
<comment type="catalytic activity">
    <reaction evidence="1 2">
        <text>S-ubiquitinyl-[E1 ubiquitin-activating enzyme]-L-cysteine + [E2 ubiquitin-conjugating enzyme]-L-cysteine = [E1 ubiquitin-activating enzyme]-L-cysteine + S-ubiquitinyl-[E2 ubiquitin-conjugating enzyme]-L-cysteine.</text>
        <dbReference type="EC" id="2.3.2.23"/>
    </reaction>
</comment>
<comment type="pathway">
    <text evidence="1">Protein modification; protein ubiquitination.</text>
</comment>
<comment type="interaction">
    <interactant intactId="EBI-101550">
        <id>P35128</id>
    </interactant>
    <interactant intactId="EBI-192329">
        <id>Q9VRL1</id>
        <label>Uev1A</label>
    </interactant>
    <organismsDiffer>false</organismsDiffer>
    <experiments>4</experiments>
</comment>
<comment type="disruption phenotype">
    <text evidence="3">Mutants in this gene exhibit several, largely neuronal defects including lesions affecting the neuronal connectivity of the giant fiber with the 'jumping muscle', and the axons of photoreceptor cells R7 and R8 fail to make the proper right-angle turn into the medulla (hence the term 'bendless').</text>
</comment>
<comment type="similarity">
    <text evidence="1">Belongs to the ubiquitin-conjugating enzyme family.</text>
</comment>
<dbReference type="EC" id="2.3.2.23"/>
<dbReference type="EMBL" id="L20126">
    <property type="protein sequence ID" value="AAA28392.1"/>
    <property type="molecule type" value="mRNA"/>
</dbReference>
<dbReference type="EMBL" id="S70118">
    <property type="protein sequence ID" value="AAB30753.1"/>
    <property type="molecule type" value="mRNA"/>
</dbReference>
<dbReference type="EMBL" id="EU217226">
    <property type="protein sequence ID" value="ABW92183.1"/>
    <property type="molecule type" value="Genomic_DNA"/>
</dbReference>
<dbReference type="EMBL" id="EU217227">
    <property type="protein sequence ID" value="ABW92184.1"/>
    <property type="molecule type" value="Genomic_DNA"/>
</dbReference>
<dbReference type="EMBL" id="EU217228">
    <property type="protein sequence ID" value="ABW92185.1"/>
    <property type="molecule type" value="Genomic_DNA"/>
</dbReference>
<dbReference type="EMBL" id="EU217229">
    <property type="protein sequence ID" value="ABW92186.1"/>
    <property type="molecule type" value="Genomic_DNA"/>
</dbReference>
<dbReference type="EMBL" id="EU217230">
    <property type="protein sequence ID" value="ABW92187.1"/>
    <property type="molecule type" value="Genomic_DNA"/>
</dbReference>
<dbReference type="EMBL" id="EU217231">
    <property type="protein sequence ID" value="ABW92188.1"/>
    <property type="molecule type" value="Genomic_DNA"/>
</dbReference>
<dbReference type="EMBL" id="EU217232">
    <property type="protein sequence ID" value="ABW92189.1"/>
    <property type="molecule type" value="Genomic_DNA"/>
</dbReference>
<dbReference type="EMBL" id="EU217233">
    <property type="protein sequence ID" value="ABW92190.1"/>
    <property type="molecule type" value="Genomic_DNA"/>
</dbReference>
<dbReference type="EMBL" id="EU217234">
    <property type="protein sequence ID" value="ABW92191.1"/>
    <property type="molecule type" value="Genomic_DNA"/>
</dbReference>
<dbReference type="EMBL" id="EU217235">
    <property type="protein sequence ID" value="ABW92192.1"/>
    <property type="molecule type" value="Genomic_DNA"/>
</dbReference>
<dbReference type="EMBL" id="EU217236">
    <property type="protein sequence ID" value="ABW92193.1"/>
    <property type="molecule type" value="Genomic_DNA"/>
</dbReference>
<dbReference type="EMBL" id="EU217237">
    <property type="protein sequence ID" value="ABW92194.1"/>
    <property type="molecule type" value="Genomic_DNA"/>
</dbReference>
<dbReference type="EMBL" id="AE014298">
    <property type="protein sequence ID" value="AAF48338.1"/>
    <property type="molecule type" value="Genomic_DNA"/>
</dbReference>
<dbReference type="EMBL" id="AY069527">
    <property type="protein sequence ID" value="AAL39672.1"/>
    <property type="molecule type" value="mRNA"/>
</dbReference>
<dbReference type="PIR" id="S35793">
    <property type="entry name" value="S35793"/>
</dbReference>
<dbReference type="RefSeq" id="NP_001162752.1">
    <property type="nucleotide sequence ID" value="NM_001169281.2"/>
</dbReference>
<dbReference type="RefSeq" id="NP_001245663.1">
    <property type="nucleotide sequence ID" value="NM_001258734.2"/>
</dbReference>
<dbReference type="RefSeq" id="NP_001259540.1">
    <property type="nucleotide sequence ID" value="NM_001272611.2"/>
</dbReference>
<dbReference type="RefSeq" id="NP_001259541.1">
    <property type="nucleotide sequence ID" value="NM_001272612.2"/>
</dbReference>
<dbReference type="RefSeq" id="NP_511150.1">
    <property type="nucleotide sequence ID" value="NM_078595.3"/>
</dbReference>
<dbReference type="SMR" id="P35128"/>
<dbReference type="BioGRID" id="58728">
    <property type="interactions" value="17"/>
</dbReference>
<dbReference type="DIP" id="DIP-22866N"/>
<dbReference type="FunCoup" id="P35128">
    <property type="interactions" value="2295"/>
</dbReference>
<dbReference type="IntAct" id="P35128">
    <property type="interactions" value="17"/>
</dbReference>
<dbReference type="STRING" id="7227.FBpp0298297"/>
<dbReference type="PaxDb" id="7227-FBpp0073686"/>
<dbReference type="DNASU" id="32358"/>
<dbReference type="EnsemblMetazoa" id="FBtr0073855">
    <property type="protein sequence ID" value="FBpp0073686"/>
    <property type="gene ID" value="FBgn0000173"/>
</dbReference>
<dbReference type="EnsemblMetazoa" id="FBtr0300566">
    <property type="protein sequence ID" value="FBpp0289793"/>
    <property type="gene ID" value="FBgn0000173"/>
</dbReference>
<dbReference type="EnsemblMetazoa" id="FBtr0307296">
    <property type="protein sequence ID" value="FBpp0298297"/>
    <property type="gene ID" value="FBgn0000173"/>
</dbReference>
<dbReference type="EnsemblMetazoa" id="FBtr0332843">
    <property type="protein sequence ID" value="FBpp0305066"/>
    <property type="gene ID" value="FBgn0000173"/>
</dbReference>
<dbReference type="EnsemblMetazoa" id="FBtr0332844">
    <property type="protein sequence ID" value="FBpp0305067"/>
    <property type="gene ID" value="FBgn0000173"/>
</dbReference>
<dbReference type="GeneID" id="32358"/>
<dbReference type="KEGG" id="dme:Dmel_CG18319"/>
<dbReference type="UCSC" id="CG18319-RA">
    <property type="organism name" value="d. melanogaster"/>
</dbReference>
<dbReference type="AGR" id="FB:FBgn0000173"/>
<dbReference type="CTD" id="32358"/>
<dbReference type="FlyBase" id="FBgn0000173">
    <property type="gene designation" value="ben"/>
</dbReference>
<dbReference type="VEuPathDB" id="VectorBase:FBgn0000173"/>
<dbReference type="eggNOG" id="KOG0417">
    <property type="taxonomic scope" value="Eukaryota"/>
</dbReference>
<dbReference type="GeneTree" id="ENSGT00540000070023"/>
<dbReference type="HOGENOM" id="CLU_030988_13_2_1"/>
<dbReference type="InParanoid" id="P35128"/>
<dbReference type="OMA" id="AEPHEDN"/>
<dbReference type="OrthoDB" id="7851174at2759"/>
<dbReference type="PhylomeDB" id="P35128"/>
<dbReference type="Reactome" id="R-DME-1169408">
    <property type="pathway name" value="ISG15 antiviral mechanism"/>
</dbReference>
<dbReference type="Reactome" id="R-DME-209447">
    <property type="pathway name" value="Activation of the IkappaB kinase complex, KEY:IRD5 dimer:KEY"/>
</dbReference>
<dbReference type="Reactome" id="R-DME-445989">
    <property type="pathway name" value="TAK1-dependent IKK and NF-kappa-B activation"/>
</dbReference>
<dbReference type="Reactome" id="R-DME-5205685">
    <property type="pathway name" value="PINK1-PRKN Mediated Mitophagy"/>
</dbReference>
<dbReference type="Reactome" id="R-DME-5693565">
    <property type="pathway name" value="Recruitment and ATM-mediated phosphorylation of repair and signaling proteins at DNA double strand breaks"/>
</dbReference>
<dbReference type="Reactome" id="R-DME-9020702">
    <property type="pathway name" value="Interleukin-1 signaling"/>
</dbReference>
<dbReference type="Reactome" id="R-DME-937039">
    <property type="pathway name" value="IRAK1 recruits IKK complex"/>
</dbReference>
<dbReference type="Reactome" id="R-DME-9646399">
    <property type="pathway name" value="Aggrephagy"/>
</dbReference>
<dbReference type="Reactome" id="R-DME-975144">
    <property type="pathway name" value="IRAK1 recruits IKK complex upon TLR7/8 or 9 stimulation"/>
</dbReference>
<dbReference type="Reactome" id="R-DME-983168">
    <property type="pathway name" value="Antigen processing: Ubiquitination &amp; Proteasome degradation"/>
</dbReference>
<dbReference type="SignaLink" id="P35128"/>
<dbReference type="UniPathway" id="UPA00143"/>
<dbReference type="BioGRID-ORCS" id="32358">
    <property type="hits" value="0 hits in 3 CRISPR screens"/>
</dbReference>
<dbReference type="ChiTaRS" id="ben">
    <property type="organism name" value="fly"/>
</dbReference>
<dbReference type="GenomeRNAi" id="32358"/>
<dbReference type="PRO" id="PR:P35128"/>
<dbReference type="Proteomes" id="UP000000803">
    <property type="component" value="Chromosome X"/>
</dbReference>
<dbReference type="Bgee" id="FBgn0000173">
    <property type="expression patterns" value="Expressed in wing disc and 300 other cell types or tissues"/>
</dbReference>
<dbReference type="ExpressionAtlas" id="P35128">
    <property type="expression patterns" value="baseline and differential"/>
</dbReference>
<dbReference type="GO" id="GO:0005829">
    <property type="term" value="C:cytosol"/>
    <property type="evidence" value="ECO:0000304"/>
    <property type="project" value="Reactome"/>
</dbReference>
<dbReference type="GO" id="GO:0005634">
    <property type="term" value="C:nucleus"/>
    <property type="evidence" value="ECO:0000314"/>
    <property type="project" value="FlyBase"/>
</dbReference>
<dbReference type="GO" id="GO:0048471">
    <property type="term" value="C:perinuclear region of cytoplasm"/>
    <property type="evidence" value="ECO:0000314"/>
    <property type="project" value="FlyBase"/>
</dbReference>
<dbReference type="GO" id="GO:0031372">
    <property type="term" value="C:UBC13-MMS2 complex"/>
    <property type="evidence" value="ECO:0000314"/>
    <property type="project" value="FlyBase"/>
</dbReference>
<dbReference type="GO" id="GO:0005524">
    <property type="term" value="F:ATP binding"/>
    <property type="evidence" value="ECO:0007669"/>
    <property type="project" value="UniProtKB-KW"/>
</dbReference>
<dbReference type="GO" id="GO:0061631">
    <property type="term" value="F:ubiquitin conjugating enzyme activity"/>
    <property type="evidence" value="ECO:0000314"/>
    <property type="project" value="FlyBase"/>
</dbReference>
<dbReference type="GO" id="GO:0031624">
    <property type="term" value="F:ubiquitin conjugating enzyme binding"/>
    <property type="evidence" value="ECO:0000353"/>
    <property type="project" value="FlyBase"/>
</dbReference>
<dbReference type="GO" id="GO:0031625">
    <property type="term" value="F:ubiquitin protein ligase binding"/>
    <property type="evidence" value="ECO:0000353"/>
    <property type="project" value="FlyBase"/>
</dbReference>
<dbReference type="GO" id="GO:0007412">
    <property type="term" value="P:axon target recognition"/>
    <property type="evidence" value="ECO:0000315"/>
    <property type="project" value="FlyBase"/>
</dbReference>
<dbReference type="GO" id="GO:0007409">
    <property type="term" value="P:axonogenesis"/>
    <property type="evidence" value="ECO:0000315"/>
    <property type="project" value="FlyBase"/>
</dbReference>
<dbReference type="GO" id="GO:0007629">
    <property type="term" value="P:flight behavior"/>
    <property type="evidence" value="ECO:0000315"/>
    <property type="project" value="FlyBase"/>
</dbReference>
<dbReference type="GO" id="GO:0007625">
    <property type="term" value="P:grooming behavior"/>
    <property type="evidence" value="ECO:0000315"/>
    <property type="project" value="FlyBase"/>
</dbReference>
<dbReference type="GO" id="GO:0007630">
    <property type="term" value="P:jump response"/>
    <property type="evidence" value="ECO:0000315"/>
    <property type="project" value="FlyBase"/>
</dbReference>
<dbReference type="GO" id="GO:0061057">
    <property type="term" value="P:peptidoglycan recognition protein signaling pathway"/>
    <property type="evidence" value="ECO:0000315"/>
    <property type="project" value="FlyBase"/>
</dbReference>
<dbReference type="GO" id="GO:0008594">
    <property type="term" value="P:photoreceptor cell morphogenesis"/>
    <property type="evidence" value="ECO:0000315"/>
    <property type="project" value="FlyBase"/>
</dbReference>
<dbReference type="GO" id="GO:0046330">
    <property type="term" value="P:positive regulation of JNK cascade"/>
    <property type="evidence" value="ECO:0000316"/>
    <property type="project" value="FlyBase"/>
</dbReference>
<dbReference type="GO" id="GO:0045977">
    <property type="term" value="P:positive regulation of mitotic cell cycle, embryonic"/>
    <property type="evidence" value="ECO:0000315"/>
    <property type="project" value="FlyBase"/>
</dbReference>
<dbReference type="GO" id="GO:0043068">
    <property type="term" value="P:positive regulation of programmed cell death"/>
    <property type="evidence" value="ECO:0000316"/>
    <property type="project" value="FlyBase"/>
</dbReference>
<dbReference type="GO" id="GO:1903265">
    <property type="term" value="P:positive regulation of tumor necrosis factor-mediated signaling pathway"/>
    <property type="evidence" value="ECO:0000316"/>
    <property type="project" value="FlyBase"/>
</dbReference>
<dbReference type="GO" id="GO:0006301">
    <property type="term" value="P:postreplication repair"/>
    <property type="evidence" value="ECO:0000318"/>
    <property type="project" value="GO_Central"/>
</dbReference>
<dbReference type="GO" id="GO:0070534">
    <property type="term" value="P:protein K63-linked ubiquitination"/>
    <property type="evidence" value="ECO:0000318"/>
    <property type="project" value="GO_Central"/>
</dbReference>
<dbReference type="GO" id="GO:0000209">
    <property type="term" value="P:protein polyubiquitination"/>
    <property type="evidence" value="ECO:0000314"/>
    <property type="project" value="FlyBase"/>
</dbReference>
<dbReference type="GO" id="GO:0072347">
    <property type="term" value="P:response to anesthetic"/>
    <property type="evidence" value="ECO:0000315"/>
    <property type="project" value="FlyBase"/>
</dbReference>
<dbReference type="GO" id="GO:0006979">
    <property type="term" value="P:response to oxidative stress"/>
    <property type="evidence" value="ECO:0000315"/>
    <property type="project" value="FlyBase"/>
</dbReference>
<dbReference type="GO" id="GO:0060074">
    <property type="term" value="P:synapse maturation"/>
    <property type="evidence" value="ECO:0000315"/>
    <property type="project" value="FlyBase"/>
</dbReference>
<dbReference type="GO" id="GO:0051124">
    <property type="term" value="P:synaptic assembly at neuromuscular junction"/>
    <property type="evidence" value="ECO:0000315"/>
    <property type="project" value="FlyBase"/>
</dbReference>
<dbReference type="CDD" id="cd23813">
    <property type="entry name" value="UBCc_UBE2N"/>
    <property type="match status" value="1"/>
</dbReference>
<dbReference type="FunFam" id="3.10.110.10:FF:000015">
    <property type="entry name" value="Ubiquitin-conjugating enzyme E2 N"/>
    <property type="match status" value="1"/>
</dbReference>
<dbReference type="Gene3D" id="3.10.110.10">
    <property type="entry name" value="Ubiquitin Conjugating Enzyme"/>
    <property type="match status" value="1"/>
</dbReference>
<dbReference type="InterPro" id="IPR000608">
    <property type="entry name" value="UBQ-conjugat_E2_core"/>
</dbReference>
<dbReference type="InterPro" id="IPR023313">
    <property type="entry name" value="UBQ-conjugating_AS"/>
</dbReference>
<dbReference type="InterPro" id="IPR016135">
    <property type="entry name" value="UBQ-conjugating_enzyme/RWD"/>
</dbReference>
<dbReference type="PANTHER" id="PTHR24068">
    <property type="entry name" value="UBIQUITIN-CONJUGATING ENZYME E2"/>
    <property type="match status" value="1"/>
</dbReference>
<dbReference type="Pfam" id="PF00179">
    <property type="entry name" value="UQ_con"/>
    <property type="match status" value="1"/>
</dbReference>
<dbReference type="SMART" id="SM00212">
    <property type="entry name" value="UBCc"/>
    <property type="match status" value="1"/>
</dbReference>
<dbReference type="SUPFAM" id="SSF54495">
    <property type="entry name" value="UBC-like"/>
    <property type="match status" value="1"/>
</dbReference>
<dbReference type="PROSITE" id="PS00183">
    <property type="entry name" value="UBC_1"/>
    <property type="match status" value="1"/>
</dbReference>
<dbReference type="PROSITE" id="PS50127">
    <property type="entry name" value="UBC_2"/>
    <property type="match status" value="1"/>
</dbReference>
<name>UBE2N_DROME</name>
<protein>
    <recommendedName>
        <fullName>Ubiquitin-conjugating enzyme E2 N</fullName>
        <ecNumber>2.3.2.23</ecNumber>
    </recommendedName>
    <alternativeName>
        <fullName>E2 ubiquitin-conjugating enzyme N</fullName>
    </alternativeName>
    <alternativeName>
        <fullName>Protein bendless</fullName>
    </alternativeName>
    <alternativeName>
        <fullName>Ubiquitin carrier protein N</fullName>
    </alternativeName>
    <alternativeName>
        <fullName>Ubiquitin-conjugating enzyme E2-17 kDa</fullName>
    </alternativeName>
    <alternativeName>
        <fullName>Ubiquitin-protein ligase D3</fullName>
    </alternativeName>
    <alternativeName>
        <fullName>Ubiquitin-protein ligase N</fullName>
    </alternativeName>
</protein>
<accession>P35128</accession>
<accession>A9YHJ7</accession>
<accession>Q9VY67</accession>
<organism>
    <name type="scientific">Drosophila melanogaster</name>
    <name type="common">Fruit fly</name>
    <dbReference type="NCBI Taxonomy" id="7227"/>
    <lineage>
        <taxon>Eukaryota</taxon>
        <taxon>Metazoa</taxon>
        <taxon>Ecdysozoa</taxon>
        <taxon>Arthropoda</taxon>
        <taxon>Hexapoda</taxon>
        <taxon>Insecta</taxon>
        <taxon>Pterygota</taxon>
        <taxon>Neoptera</taxon>
        <taxon>Endopterygota</taxon>
        <taxon>Diptera</taxon>
        <taxon>Brachycera</taxon>
        <taxon>Muscomorpha</taxon>
        <taxon>Ephydroidea</taxon>
        <taxon>Drosophilidae</taxon>
        <taxon>Drosophila</taxon>
        <taxon>Sophophora</taxon>
    </lineage>
</organism>
<evidence type="ECO:0000255" key="1">
    <source>
        <dbReference type="PROSITE-ProRule" id="PRU00388"/>
    </source>
</evidence>
<evidence type="ECO:0000255" key="2">
    <source>
        <dbReference type="PROSITE-ProRule" id="PRU10133"/>
    </source>
</evidence>
<evidence type="ECO:0000269" key="3">
    <source>
    </source>
</evidence>
<gene>
    <name type="primary">ben</name>
    <name type="synonym">UbcD3</name>
    <name type="ORF">CG18319</name>
</gene>
<reference key="1">
    <citation type="journal article" date="1993" name="Neuron">
        <title>The Drosophila bendless gene encodes a neural protein related to ubiquitin-conjugating enzymes.</title>
        <authorList>
            <person name="Muralidhar M."/>
            <person name="Thomas J.B."/>
        </authorList>
    </citation>
    <scope>NUCLEOTIDE SEQUENCE [MRNA]</scope>
    <scope>DISRUPTION PHENOTYPE</scope>
</reference>
<reference key="2">
    <citation type="journal article" date="1994" name="J. Neurosci.">
        <title>Bendless, a Drosophila gene affecting neuronal connectivity, encodes a ubiquitin-conjugating enzyme homolog.</title>
        <authorList>
            <person name="Oh C.E."/>
            <person name="McMahon R."/>
            <person name="Benzer S."/>
            <person name="Tanouye M.A."/>
        </authorList>
    </citation>
    <scope>NUCLEOTIDE SEQUENCE [MRNA]</scope>
</reference>
<reference key="3">
    <citation type="journal article" date="2007" name="Genome Res.">
        <title>Hitchhiking effects of recurrent beneficial amino acid substitutions in the Drosophila melanogaster genome.</title>
        <authorList>
            <person name="Andolfatto P."/>
        </authorList>
    </citation>
    <scope>NUCLEOTIDE SEQUENCE [GENOMIC DNA]</scope>
    <source>
        <strain>ZW104</strain>
        <strain>ZW109</strain>
        <strain>ZW122</strain>
        <strain>ZW123</strain>
        <strain>ZW133</strain>
        <strain>ZW136</strain>
        <strain>ZW139</strain>
        <strain>ZW140</strain>
        <strain>ZW141</strain>
        <strain>ZW142</strain>
        <strain>ZW143</strain>
        <strain>ZW144</strain>
    </source>
</reference>
<reference key="4">
    <citation type="journal article" date="2000" name="Science">
        <title>The genome sequence of Drosophila melanogaster.</title>
        <authorList>
            <person name="Adams M.D."/>
            <person name="Celniker S.E."/>
            <person name="Holt R.A."/>
            <person name="Evans C.A."/>
            <person name="Gocayne J.D."/>
            <person name="Amanatides P.G."/>
            <person name="Scherer S.E."/>
            <person name="Li P.W."/>
            <person name="Hoskins R.A."/>
            <person name="Galle R.F."/>
            <person name="George R.A."/>
            <person name="Lewis S.E."/>
            <person name="Richards S."/>
            <person name="Ashburner M."/>
            <person name="Henderson S.N."/>
            <person name="Sutton G.G."/>
            <person name="Wortman J.R."/>
            <person name="Yandell M.D."/>
            <person name="Zhang Q."/>
            <person name="Chen L.X."/>
            <person name="Brandon R.C."/>
            <person name="Rogers Y.-H.C."/>
            <person name="Blazej R.G."/>
            <person name="Champe M."/>
            <person name="Pfeiffer B.D."/>
            <person name="Wan K.H."/>
            <person name="Doyle C."/>
            <person name="Baxter E.G."/>
            <person name="Helt G."/>
            <person name="Nelson C.R."/>
            <person name="Miklos G.L.G."/>
            <person name="Abril J.F."/>
            <person name="Agbayani A."/>
            <person name="An H.-J."/>
            <person name="Andrews-Pfannkoch C."/>
            <person name="Baldwin D."/>
            <person name="Ballew R.M."/>
            <person name="Basu A."/>
            <person name="Baxendale J."/>
            <person name="Bayraktaroglu L."/>
            <person name="Beasley E.M."/>
            <person name="Beeson K.Y."/>
            <person name="Benos P.V."/>
            <person name="Berman B.P."/>
            <person name="Bhandari D."/>
            <person name="Bolshakov S."/>
            <person name="Borkova D."/>
            <person name="Botchan M.R."/>
            <person name="Bouck J."/>
            <person name="Brokstein P."/>
            <person name="Brottier P."/>
            <person name="Burtis K.C."/>
            <person name="Busam D.A."/>
            <person name="Butler H."/>
            <person name="Cadieu E."/>
            <person name="Center A."/>
            <person name="Chandra I."/>
            <person name="Cherry J.M."/>
            <person name="Cawley S."/>
            <person name="Dahlke C."/>
            <person name="Davenport L.B."/>
            <person name="Davies P."/>
            <person name="de Pablos B."/>
            <person name="Delcher A."/>
            <person name="Deng Z."/>
            <person name="Mays A.D."/>
            <person name="Dew I."/>
            <person name="Dietz S.M."/>
            <person name="Dodson K."/>
            <person name="Doup L.E."/>
            <person name="Downes M."/>
            <person name="Dugan-Rocha S."/>
            <person name="Dunkov B.C."/>
            <person name="Dunn P."/>
            <person name="Durbin K.J."/>
            <person name="Evangelista C.C."/>
            <person name="Ferraz C."/>
            <person name="Ferriera S."/>
            <person name="Fleischmann W."/>
            <person name="Fosler C."/>
            <person name="Gabrielian A.E."/>
            <person name="Garg N.S."/>
            <person name="Gelbart W.M."/>
            <person name="Glasser K."/>
            <person name="Glodek A."/>
            <person name="Gong F."/>
            <person name="Gorrell J.H."/>
            <person name="Gu Z."/>
            <person name="Guan P."/>
            <person name="Harris M."/>
            <person name="Harris N.L."/>
            <person name="Harvey D.A."/>
            <person name="Heiman T.J."/>
            <person name="Hernandez J.R."/>
            <person name="Houck J."/>
            <person name="Hostin D."/>
            <person name="Houston K.A."/>
            <person name="Howland T.J."/>
            <person name="Wei M.-H."/>
            <person name="Ibegwam C."/>
            <person name="Jalali M."/>
            <person name="Kalush F."/>
            <person name="Karpen G.H."/>
            <person name="Ke Z."/>
            <person name="Kennison J.A."/>
            <person name="Ketchum K.A."/>
            <person name="Kimmel B.E."/>
            <person name="Kodira C.D."/>
            <person name="Kraft C.L."/>
            <person name="Kravitz S."/>
            <person name="Kulp D."/>
            <person name="Lai Z."/>
            <person name="Lasko P."/>
            <person name="Lei Y."/>
            <person name="Levitsky A.A."/>
            <person name="Li J.H."/>
            <person name="Li Z."/>
            <person name="Liang Y."/>
            <person name="Lin X."/>
            <person name="Liu X."/>
            <person name="Mattei B."/>
            <person name="McIntosh T.C."/>
            <person name="McLeod M.P."/>
            <person name="McPherson D."/>
            <person name="Merkulov G."/>
            <person name="Milshina N.V."/>
            <person name="Mobarry C."/>
            <person name="Morris J."/>
            <person name="Moshrefi A."/>
            <person name="Mount S.M."/>
            <person name="Moy M."/>
            <person name="Murphy B."/>
            <person name="Murphy L."/>
            <person name="Muzny D.M."/>
            <person name="Nelson D.L."/>
            <person name="Nelson D.R."/>
            <person name="Nelson K.A."/>
            <person name="Nixon K."/>
            <person name="Nusskern D.R."/>
            <person name="Pacleb J.M."/>
            <person name="Palazzolo M."/>
            <person name="Pittman G.S."/>
            <person name="Pan S."/>
            <person name="Pollard J."/>
            <person name="Puri V."/>
            <person name="Reese M.G."/>
            <person name="Reinert K."/>
            <person name="Remington K."/>
            <person name="Saunders R.D.C."/>
            <person name="Scheeler F."/>
            <person name="Shen H."/>
            <person name="Shue B.C."/>
            <person name="Siden-Kiamos I."/>
            <person name="Simpson M."/>
            <person name="Skupski M.P."/>
            <person name="Smith T.J."/>
            <person name="Spier E."/>
            <person name="Spradling A.C."/>
            <person name="Stapleton M."/>
            <person name="Strong R."/>
            <person name="Sun E."/>
            <person name="Svirskas R."/>
            <person name="Tector C."/>
            <person name="Turner R."/>
            <person name="Venter E."/>
            <person name="Wang A.H."/>
            <person name="Wang X."/>
            <person name="Wang Z.-Y."/>
            <person name="Wassarman D.A."/>
            <person name="Weinstock G.M."/>
            <person name="Weissenbach J."/>
            <person name="Williams S.M."/>
            <person name="Woodage T."/>
            <person name="Worley K.C."/>
            <person name="Wu D."/>
            <person name="Yang S."/>
            <person name="Yao Q.A."/>
            <person name="Ye J."/>
            <person name="Yeh R.-F."/>
            <person name="Zaveri J.S."/>
            <person name="Zhan M."/>
            <person name="Zhang G."/>
            <person name="Zhao Q."/>
            <person name="Zheng L."/>
            <person name="Zheng X.H."/>
            <person name="Zhong F.N."/>
            <person name="Zhong W."/>
            <person name="Zhou X."/>
            <person name="Zhu S.C."/>
            <person name="Zhu X."/>
            <person name="Smith H.O."/>
            <person name="Gibbs R.A."/>
            <person name="Myers E.W."/>
            <person name="Rubin G.M."/>
            <person name="Venter J.C."/>
        </authorList>
    </citation>
    <scope>NUCLEOTIDE SEQUENCE [LARGE SCALE GENOMIC DNA]</scope>
    <source>
        <strain>Berkeley</strain>
    </source>
</reference>
<reference key="5">
    <citation type="journal article" date="2002" name="Genome Biol.">
        <title>Annotation of the Drosophila melanogaster euchromatic genome: a systematic review.</title>
        <authorList>
            <person name="Misra S."/>
            <person name="Crosby M.A."/>
            <person name="Mungall C.J."/>
            <person name="Matthews B.B."/>
            <person name="Campbell K.S."/>
            <person name="Hradecky P."/>
            <person name="Huang Y."/>
            <person name="Kaminker J.S."/>
            <person name="Millburn G.H."/>
            <person name="Prochnik S.E."/>
            <person name="Smith C.D."/>
            <person name="Tupy J.L."/>
            <person name="Whitfield E.J."/>
            <person name="Bayraktaroglu L."/>
            <person name="Berman B.P."/>
            <person name="Bettencourt B.R."/>
            <person name="Celniker S.E."/>
            <person name="de Grey A.D.N.J."/>
            <person name="Drysdale R.A."/>
            <person name="Harris N.L."/>
            <person name="Richter J."/>
            <person name="Russo S."/>
            <person name="Schroeder A.J."/>
            <person name="Shu S.Q."/>
            <person name="Stapleton M."/>
            <person name="Yamada C."/>
            <person name="Ashburner M."/>
            <person name="Gelbart W.M."/>
            <person name="Rubin G.M."/>
            <person name="Lewis S.E."/>
        </authorList>
    </citation>
    <scope>GENOME REANNOTATION</scope>
    <source>
        <strain>Berkeley</strain>
    </source>
</reference>
<reference key="6">
    <citation type="journal article" date="2002" name="Genome Biol.">
        <title>A Drosophila full-length cDNA resource.</title>
        <authorList>
            <person name="Stapleton M."/>
            <person name="Carlson J.W."/>
            <person name="Brokstein P."/>
            <person name="Yu C."/>
            <person name="Champe M."/>
            <person name="George R.A."/>
            <person name="Guarin H."/>
            <person name="Kronmiller B."/>
            <person name="Pacleb J.M."/>
            <person name="Park S."/>
            <person name="Wan K.H."/>
            <person name="Rubin G.M."/>
            <person name="Celniker S.E."/>
        </authorList>
    </citation>
    <scope>NUCLEOTIDE SEQUENCE [LARGE SCALE MRNA]</scope>
    <source>
        <strain>Berkeley</strain>
        <tissue>Embryo</tissue>
    </source>
</reference>
<sequence>MSSLPRRIIKETQRLMQEPVPGINAIPDENNARYFHVIVTGPNDSPFEGGVFKLELFLPEDYPMSAPKVRFITKIYHPNIDRLGRICLDVLKDKWSPALQIRTILLSIQALLSAPNPDDPLANDVAELWKVNEAEAIRNAREWTQKYAVED</sequence>